<feature type="chain" id="PRO_0000258418" description="Phosphoribosylformylglycinamidine cyclo-ligase">
    <location>
        <begin position="1"/>
        <end position="339"/>
    </location>
</feature>
<reference key="1">
    <citation type="journal article" date="2004" name="Nat. Biotechnol.">
        <title>Complete sequence and comparative genome analysis of the dairy bacterium Streptococcus thermophilus.</title>
        <authorList>
            <person name="Bolotin A."/>
            <person name="Quinquis B."/>
            <person name="Renault P."/>
            <person name="Sorokin A."/>
            <person name="Ehrlich S.D."/>
            <person name="Kulakauskas S."/>
            <person name="Lapidus A."/>
            <person name="Goltsman E."/>
            <person name="Mazur M."/>
            <person name="Pusch G.D."/>
            <person name="Fonstein M."/>
            <person name="Overbeek R."/>
            <person name="Kyprides N."/>
            <person name="Purnelle B."/>
            <person name="Prozzi D."/>
            <person name="Ngui K."/>
            <person name="Masuy D."/>
            <person name="Hancy F."/>
            <person name="Burteau S."/>
            <person name="Boutry M."/>
            <person name="Delcour J."/>
            <person name="Goffeau A."/>
            <person name="Hols P."/>
        </authorList>
    </citation>
    <scope>NUCLEOTIDE SEQUENCE [LARGE SCALE GENOMIC DNA]</scope>
    <source>
        <strain>ATCC BAA-250 / LMG 18311</strain>
    </source>
</reference>
<dbReference type="EC" id="6.3.3.1" evidence="1"/>
<dbReference type="EMBL" id="CP000023">
    <property type="protein sequence ID" value="AAV59763.1"/>
    <property type="molecule type" value="Genomic_DNA"/>
</dbReference>
<dbReference type="SMR" id="Q5M6J5"/>
<dbReference type="STRING" id="264199.stu0033"/>
<dbReference type="KEGG" id="stl:stu0033"/>
<dbReference type="eggNOG" id="COG0150">
    <property type="taxonomic scope" value="Bacteria"/>
</dbReference>
<dbReference type="HOGENOM" id="CLU_047116_0_0_9"/>
<dbReference type="UniPathway" id="UPA00074">
    <property type="reaction ID" value="UER00129"/>
</dbReference>
<dbReference type="Proteomes" id="UP000001170">
    <property type="component" value="Chromosome"/>
</dbReference>
<dbReference type="GO" id="GO:0005829">
    <property type="term" value="C:cytosol"/>
    <property type="evidence" value="ECO:0007669"/>
    <property type="project" value="TreeGrafter"/>
</dbReference>
<dbReference type="GO" id="GO:0005524">
    <property type="term" value="F:ATP binding"/>
    <property type="evidence" value="ECO:0007669"/>
    <property type="project" value="UniProtKB-KW"/>
</dbReference>
<dbReference type="GO" id="GO:0004637">
    <property type="term" value="F:phosphoribosylamine-glycine ligase activity"/>
    <property type="evidence" value="ECO:0007669"/>
    <property type="project" value="TreeGrafter"/>
</dbReference>
<dbReference type="GO" id="GO:0004641">
    <property type="term" value="F:phosphoribosylformylglycinamidine cyclo-ligase activity"/>
    <property type="evidence" value="ECO:0007669"/>
    <property type="project" value="UniProtKB-UniRule"/>
</dbReference>
<dbReference type="GO" id="GO:0006189">
    <property type="term" value="P:'de novo' IMP biosynthetic process"/>
    <property type="evidence" value="ECO:0007669"/>
    <property type="project" value="UniProtKB-UniRule"/>
</dbReference>
<dbReference type="GO" id="GO:0046084">
    <property type="term" value="P:adenine biosynthetic process"/>
    <property type="evidence" value="ECO:0007669"/>
    <property type="project" value="TreeGrafter"/>
</dbReference>
<dbReference type="CDD" id="cd02196">
    <property type="entry name" value="PurM"/>
    <property type="match status" value="1"/>
</dbReference>
<dbReference type="FunFam" id="3.30.1330.10:FF:000001">
    <property type="entry name" value="Phosphoribosylformylglycinamidine cyclo-ligase"/>
    <property type="match status" value="1"/>
</dbReference>
<dbReference type="FunFam" id="3.90.650.10:FF:000011">
    <property type="entry name" value="Phosphoribosylformylglycinamidine cyclo-ligase"/>
    <property type="match status" value="1"/>
</dbReference>
<dbReference type="Gene3D" id="3.90.650.10">
    <property type="entry name" value="PurM-like C-terminal domain"/>
    <property type="match status" value="1"/>
</dbReference>
<dbReference type="Gene3D" id="3.30.1330.10">
    <property type="entry name" value="PurM-like, N-terminal domain"/>
    <property type="match status" value="1"/>
</dbReference>
<dbReference type="HAMAP" id="MF_00741">
    <property type="entry name" value="AIRS"/>
    <property type="match status" value="1"/>
</dbReference>
<dbReference type="InterPro" id="IPR010918">
    <property type="entry name" value="PurM-like_C_dom"/>
</dbReference>
<dbReference type="InterPro" id="IPR036676">
    <property type="entry name" value="PurM-like_C_sf"/>
</dbReference>
<dbReference type="InterPro" id="IPR016188">
    <property type="entry name" value="PurM-like_N"/>
</dbReference>
<dbReference type="InterPro" id="IPR036921">
    <property type="entry name" value="PurM-like_N_sf"/>
</dbReference>
<dbReference type="InterPro" id="IPR004733">
    <property type="entry name" value="PurM_cligase"/>
</dbReference>
<dbReference type="NCBIfam" id="TIGR00878">
    <property type="entry name" value="purM"/>
    <property type="match status" value="1"/>
</dbReference>
<dbReference type="PANTHER" id="PTHR10520:SF12">
    <property type="entry name" value="TRIFUNCTIONAL PURINE BIOSYNTHETIC PROTEIN ADENOSINE-3"/>
    <property type="match status" value="1"/>
</dbReference>
<dbReference type="PANTHER" id="PTHR10520">
    <property type="entry name" value="TRIFUNCTIONAL PURINE BIOSYNTHETIC PROTEIN ADENOSINE-3-RELATED"/>
    <property type="match status" value="1"/>
</dbReference>
<dbReference type="Pfam" id="PF00586">
    <property type="entry name" value="AIRS"/>
    <property type="match status" value="1"/>
</dbReference>
<dbReference type="Pfam" id="PF02769">
    <property type="entry name" value="AIRS_C"/>
    <property type="match status" value="1"/>
</dbReference>
<dbReference type="SUPFAM" id="SSF56042">
    <property type="entry name" value="PurM C-terminal domain-like"/>
    <property type="match status" value="1"/>
</dbReference>
<dbReference type="SUPFAM" id="SSF55326">
    <property type="entry name" value="PurM N-terminal domain-like"/>
    <property type="match status" value="1"/>
</dbReference>
<accession>Q5M6J5</accession>
<gene>
    <name evidence="1" type="primary">purM</name>
    <name type="ordered locus">stu0033</name>
</gene>
<protein>
    <recommendedName>
        <fullName evidence="1">Phosphoribosylformylglycinamidine cyclo-ligase</fullName>
        <ecNumber evidence="1">6.3.3.1</ecNumber>
    </recommendedName>
    <alternativeName>
        <fullName evidence="1">AIR synthase</fullName>
    </alternativeName>
    <alternativeName>
        <fullName evidence="1">AIRS</fullName>
    </alternativeName>
    <alternativeName>
        <fullName evidence="1">Phosphoribosyl-aminoimidazole synthetase</fullName>
    </alternativeName>
</protein>
<keyword id="KW-0067">ATP-binding</keyword>
<keyword id="KW-0963">Cytoplasm</keyword>
<keyword id="KW-0436">Ligase</keyword>
<keyword id="KW-0547">Nucleotide-binding</keyword>
<keyword id="KW-0658">Purine biosynthesis</keyword>
<keyword id="KW-1185">Reference proteome</keyword>
<evidence type="ECO:0000255" key="1">
    <source>
        <dbReference type="HAMAP-Rule" id="MF_00741"/>
    </source>
</evidence>
<sequence>MSKNAYAQSGVDVEAGYEVVERIKKHVARTERAGVMGGLGGFGGMFDLSKTGVKEPVLISGTDGVGTKLMLAIKYDKHDTIGQDCVAMCVNDIIAAGAEPLYFLDYVATGKNEPAKLEQVIAGVAEGCVQSGVALIGGETAEMPGMYGEDDYDLAGFAVGVAEKSQIIDGSKVAEGDVLLGLASSGIHSNGYSLVRRVFADYTGEEVLPELEGQKLKDVLLEPTRIYVKAALPLIKEELVNGIAHITGGGFIENVPRMFSDDLAAEIDESKVPVLPIFKALEKYGEIKHEEMFEIFNMGIGLMFAVKPENVERVKELLDEPVYEIGRIVKKDGASVVIK</sequence>
<name>PUR5_STRT2</name>
<organism>
    <name type="scientific">Streptococcus thermophilus (strain ATCC BAA-250 / LMG 18311)</name>
    <dbReference type="NCBI Taxonomy" id="264199"/>
    <lineage>
        <taxon>Bacteria</taxon>
        <taxon>Bacillati</taxon>
        <taxon>Bacillota</taxon>
        <taxon>Bacilli</taxon>
        <taxon>Lactobacillales</taxon>
        <taxon>Streptococcaceae</taxon>
        <taxon>Streptococcus</taxon>
    </lineage>
</organism>
<comment type="catalytic activity">
    <reaction evidence="1">
        <text>2-formamido-N(1)-(5-O-phospho-beta-D-ribosyl)acetamidine + ATP = 5-amino-1-(5-phospho-beta-D-ribosyl)imidazole + ADP + phosphate + H(+)</text>
        <dbReference type="Rhea" id="RHEA:23032"/>
        <dbReference type="ChEBI" id="CHEBI:15378"/>
        <dbReference type="ChEBI" id="CHEBI:30616"/>
        <dbReference type="ChEBI" id="CHEBI:43474"/>
        <dbReference type="ChEBI" id="CHEBI:137981"/>
        <dbReference type="ChEBI" id="CHEBI:147287"/>
        <dbReference type="ChEBI" id="CHEBI:456216"/>
        <dbReference type="EC" id="6.3.3.1"/>
    </reaction>
</comment>
<comment type="pathway">
    <text evidence="1">Purine metabolism; IMP biosynthesis via de novo pathway; 5-amino-1-(5-phospho-D-ribosyl)imidazole from N(2)-formyl-N(1)-(5-phospho-D-ribosyl)glycinamide: step 2/2.</text>
</comment>
<comment type="subcellular location">
    <subcellularLocation>
        <location evidence="1">Cytoplasm</location>
    </subcellularLocation>
</comment>
<comment type="similarity">
    <text evidence="1">Belongs to the AIR synthase family.</text>
</comment>
<proteinExistence type="inferred from homology"/>